<feature type="chain" id="PRO_0000138488" description="UPF0145 protein VV2_1464">
    <location>
        <begin position="1"/>
        <end position="106"/>
    </location>
</feature>
<organism>
    <name type="scientific">Vibrio vulnificus (strain CMCP6)</name>
    <dbReference type="NCBI Taxonomy" id="216895"/>
    <lineage>
        <taxon>Bacteria</taxon>
        <taxon>Pseudomonadati</taxon>
        <taxon>Pseudomonadota</taxon>
        <taxon>Gammaproteobacteria</taxon>
        <taxon>Vibrionales</taxon>
        <taxon>Vibrionaceae</taxon>
        <taxon>Vibrio</taxon>
    </lineage>
</organism>
<evidence type="ECO:0000255" key="1">
    <source>
        <dbReference type="HAMAP-Rule" id="MF_00338"/>
    </source>
</evidence>
<accession>Q8D461</accession>
<comment type="similarity">
    <text evidence="1">Belongs to the UPF0145 family.</text>
</comment>
<dbReference type="EMBL" id="AE016796">
    <property type="protein sequence ID" value="AAO08334.1"/>
    <property type="molecule type" value="Genomic_DNA"/>
</dbReference>
<dbReference type="RefSeq" id="WP_011082323.1">
    <property type="nucleotide sequence ID" value="NC_004460.2"/>
</dbReference>
<dbReference type="SMR" id="Q8D461"/>
<dbReference type="KEGG" id="vvu:VV2_1464"/>
<dbReference type="HOGENOM" id="CLU_117144_3_2_6"/>
<dbReference type="Proteomes" id="UP000002275">
    <property type="component" value="Chromosome 2"/>
</dbReference>
<dbReference type="Gene3D" id="3.30.110.70">
    <property type="entry name" value="Hypothetical protein apc22750. Chain B"/>
    <property type="match status" value="1"/>
</dbReference>
<dbReference type="HAMAP" id="MF_00338">
    <property type="entry name" value="UPF0145"/>
    <property type="match status" value="1"/>
</dbReference>
<dbReference type="InterPro" id="IPR035439">
    <property type="entry name" value="UPF0145_dom_sf"/>
</dbReference>
<dbReference type="InterPro" id="IPR002765">
    <property type="entry name" value="UPF0145_YbjQ-like"/>
</dbReference>
<dbReference type="NCBIfam" id="NF002776">
    <property type="entry name" value="PRK02877.1"/>
    <property type="match status" value="1"/>
</dbReference>
<dbReference type="PANTHER" id="PTHR34068">
    <property type="entry name" value="UPF0145 PROTEIN YBJQ"/>
    <property type="match status" value="1"/>
</dbReference>
<dbReference type="PANTHER" id="PTHR34068:SF1">
    <property type="entry name" value="UPF0145 PROTEIN YBJQ"/>
    <property type="match status" value="1"/>
</dbReference>
<dbReference type="Pfam" id="PF01906">
    <property type="entry name" value="YbjQ_1"/>
    <property type="match status" value="1"/>
</dbReference>
<dbReference type="SUPFAM" id="SSF117782">
    <property type="entry name" value="YbjQ-like"/>
    <property type="match status" value="1"/>
</dbReference>
<protein>
    <recommendedName>
        <fullName evidence="1">UPF0145 protein VV2_1464</fullName>
    </recommendedName>
</protein>
<reference key="1">
    <citation type="submission" date="2002-12" db="EMBL/GenBank/DDBJ databases">
        <title>Complete genome sequence of Vibrio vulnificus CMCP6.</title>
        <authorList>
            <person name="Rhee J.H."/>
            <person name="Kim S.Y."/>
            <person name="Chung S.S."/>
            <person name="Kim J.J."/>
            <person name="Moon Y.H."/>
            <person name="Jeong H."/>
            <person name="Choy H.E."/>
        </authorList>
    </citation>
    <scope>NUCLEOTIDE SEQUENCE [LARGE SCALE GENOMIC DNA]</scope>
    <source>
        <strain>CMCP6</strain>
    </source>
</reference>
<proteinExistence type="inferred from homology"/>
<gene>
    <name type="ordered locus">VV2_1464</name>
</gene>
<name>YBG4_VIBVU</name>
<sequence length="106" mass="11387">MIVTTTQHIEGKKIIAYKGVIAGEAILGANLFKDLFAGIRDMVGGRSGTYERELERARTIAFQELEQKARELGANAIVGVDIDYEVLGQSNGMLMVSASGTAVVIE</sequence>